<keyword id="KW-0002">3D-structure</keyword>
<keyword id="KW-0378">Hydrolase</keyword>
<keyword id="KW-0460">Magnesium</keyword>
<keyword id="KW-0479">Metal-binding</keyword>
<keyword id="KW-0482">Metalloprotease</keyword>
<keyword id="KW-0574">Periplasm</keyword>
<keyword id="KW-0645">Protease</keyword>
<keyword id="KW-1185">Reference proteome</keyword>
<keyword id="KW-0732">Signal</keyword>
<keyword id="KW-0862">Zinc</keyword>
<accession>P05458</accession>
<accession>P78106</accession>
<accession>Q2MA16</accession>
<protein>
    <recommendedName>
        <fullName>Protease 3</fullName>
        <ecNumber>3.4.24.55</ecNumber>
    </recommendedName>
    <alternativeName>
        <fullName>Pitrilysin</fullName>
    </alternativeName>
    <alternativeName>
        <fullName>Protease III</fullName>
    </alternativeName>
    <alternativeName>
        <fullName>Protease pi</fullName>
    </alternativeName>
</protein>
<sequence>MPRSTWFKALLLLVALWAPLSQAETGWQPIQETIRKSDKDNRQYQAIRLDNGMVVLLVSDPQAVKSLSALVVPVGSLEDPEAYQGLAHYLEHMSLMGSKKYPQADSLAEYLKMHGGSHNASTAPYRTAFYLEVENDALPGAVDRLADAIAEPLLDKKYAERERNAVNAELTMARTRDGMRMAQVSAETINPAHPGSKFSGGNLETLSDKPGNPVQQALKDFHEKYYSANLMKAVIYSNKPLPELAKMAADTFGRVPNKESKKPEITVPVVTDAQKGIIIHYVPALPRKVLRVEFRIDNNSAKFRSKTDELITYLIGNRSPGTLSDWLQKQGLVEGISANSDPIVNGNSGVLAISASLTDKGLANRDQVVAAIFSYLNLLREKGIDKQYFDELANVLDIDFRYPSITRDMDYVEWLADTMIRVPVEHTLDAVNIADRYDAKAVKERLAMMTPQNARIWYISPKEPHNKTAYFVDAPYQVDKISAQTFADWQKKAADIALSLPELNPYIPDDFSLIKSEKKYDHPELIVDESNLRVVYAPSRYFASEPKADVSLILRNPKAMDSARNQVMFALNDYLAGLALDQLSNQASVGGISFSTNANNGLMVNANGYTQRLPQLFQALLEGYFSYTATEDQLEQAKSWYNQMMDSAEKGKAFEQAIMPAQMLSQVPYFSRDERRKILPSITLKEVLAYRDALKSGARPEFMVIGNMTEAQATTLARDVQKQLGADGSEWCRNKDVVVDKKQSVIFEKAGNSTDSALAAVFVPTGYDEYTSSAYSSLLGQIVQPWFYNQLRTEEQLGYAVFAFPMSVGRQWGMGFLLQSNDKQPSFLWERYKAFFPTAEAKLRAMKPDEFAQIQQAVITQMLQAPQTLGEEASKLSKDFDRGNMRFDSRDKIVAQIKLLTPQKLADFFHQAVVEPQGMAILSQISGSQNGKAEYVHPEGWKVWENVSALQQTMPLMSEKNE</sequence>
<dbReference type="EC" id="3.4.24.55"/>
<dbReference type="EMBL" id="X04581">
    <property type="protein sequence ID" value="CAA28249.1"/>
    <property type="molecule type" value="Genomic_DNA"/>
</dbReference>
<dbReference type="EMBL" id="U29581">
    <property type="protein sequence ID" value="AAB40468.1"/>
    <property type="molecule type" value="Genomic_DNA"/>
</dbReference>
<dbReference type="EMBL" id="U00096">
    <property type="protein sequence ID" value="AAC75860.1"/>
    <property type="molecule type" value="Genomic_DNA"/>
</dbReference>
<dbReference type="EMBL" id="AP009048">
    <property type="protein sequence ID" value="BAE76890.1"/>
    <property type="molecule type" value="Genomic_DNA"/>
</dbReference>
<dbReference type="EMBL" id="X06227">
    <property type="protein sequence ID" value="CAA29576.1"/>
    <property type="molecule type" value="Genomic_DNA"/>
</dbReference>
<dbReference type="EMBL" id="M17095">
    <property type="protein sequence ID" value="AAA24436.1"/>
    <property type="molecule type" value="Genomic_DNA"/>
</dbReference>
<dbReference type="PIR" id="F65064">
    <property type="entry name" value="SNECPI"/>
</dbReference>
<dbReference type="RefSeq" id="NP_417298.1">
    <property type="nucleotide sequence ID" value="NC_000913.3"/>
</dbReference>
<dbReference type="RefSeq" id="WP_001138201.1">
    <property type="nucleotide sequence ID" value="NZ_LN832404.1"/>
</dbReference>
<dbReference type="PDB" id="1Q2L">
    <property type="method" value="X-ray"/>
    <property type="resolution" value="2.20 A"/>
    <property type="chains" value="A=24-962"/>
</dbReference>
<dbReference type="PDBsum" id="1Q2L"/>
<dbReference type="SMR" id="P05458"/>
<dbReference type="BioGRID" id="4262308">
    <property type="interactions" value="45"/>
</dbReference>
<dbReference type="BioGRID" id="851612">
    <property type="interactions" value="1"/>
</dbReference>
<dbReference type="FunCoup" id="P05458">
    <property type="interactions" value="568"/>
</dbReference>
<dbReference type="IntAct" id="P05458">
    <property type="interactions" value="12"/>
</dbReference>
<dbReference type="STRING" id="511145.b2821"/>
<dbReference type="MEROPS" id="M16.001"/>
<dbReference type="jPOST" id="P05458"/>
<dbReference type="PaxDb" id="511145-b2821"/>
<dbReference type="EnsemblBacteria" id="AAC75860">
    <property type="protein sequence ID" value="AAC75860"/>
    <property type="gene ID" value="b2821"/>
</dbReference>
<dbReference type="GeneID" id="947284"/>
<dbReference type="KEGG" id="ecj:JW2789"/>
<dbReference type="KEGG" id="eco:b2821"/>
<dbReference type="KEGG" id="ecoc:C3026_15490"/>
<dbReference type="PATRIC" id="fig|1411691.4.peg.3915"/>
<dbReference type="EchoBASE" id="EB0779"/>
<dbReference type="eggNOG" id="COG1025">
    <property type="taxonomic scope" value="Bacteria"/>
</dbReference>
<dbReference type="HOGENOM" id="CLU_004639_1_3_6"/>
<dbReference type="InParanoid" id="P05458"/>
<dbReference type="OMA" id="WIFDEMK"/>
<dbReference type="OrthoDB" id="9811314at2"/>
<dbReference type="PhylomeDB" id="P05458"/>
<dbReference type="BioCyc" id="EcoCyc:EG10786-MONOMER"/>
<dbReference type="BioCyc" id="MetaCyc:EG10786-MONOMER"/>
<dbReference type="EvolutionaryTrace" id="P05458"/>
<dbReference type="PRO" id="PR:P05458"/>
<dbReference type="Proteomes" id="UP000000625">
    <property type="component" value="Chromosome"/>
</dbReference>
<dbReference type="GO" id="GO:0005737">
    <property type="term" value="C:cytoplasm"/>
    <property type="evidence" value="ECO:0000314"/>
    <property type="project" value="EcoliWiki"/>
</dbReference>
<dbReference type="GO" id="GO:0030288">
    <property type="term" value="C:outer membrane-bounded periplasmic space"/>
    <property type="evidence" value="ECO:0000314"/>
    <property type="project" value="EcoCyc"/>
</dbReference>
<dbReference type="GO" id="GO:0004222">
    <property type="term" value="F:metalloendopeptidase activity"/>
    <property type="evidence" value="ECO:0000314"/>
    <property type="project" value="EcoliWiki"/>
</dbReference>
<dbReference type="GO" id="GO:0008270">
    <property type="term" value="F:zinc ion binding"/>
    <property type="evidence" value="ECO:0000314"/>
    <property type="project" value="EcoliWiki"/>
</dbReference>
<dbReference type="GO" id="GO:0006508">
    <property type="term" value="P:proteolysis"/>
    <property type="evidence" value="ECO:0000314"/>
    <property type="project" value="EcoliWiki"/>
</dbReference>
<dbReference type="FunFam" id="3.30.830.10:FF:000012">
    <property type="entry name" value="Protease 3"/>
    <property type="match status" value="1"/>
</dbReference>
<dbReference type="Gene3D" id="3.30.830.10">
    <property type="entry name" value="Metalloenzyme, LuxS/M16 peptidase-like"/>
    <property type="match status" value="4"/>
</dbReference>
<dbReference type="InterPro" id="IPR011249">
    <property type="entry name" value="Metalloenz_LuxS/M16"/>
</dbReference>
<dbReference type="InterPro" id="IPR011765">
    <property type="entry name" value="Pept_M16_N"/>
</dbReference>
<dbReference type="InterPro" id="IPR001431">
    <property type="entry name" value="Pept_M16_Zn_BS"/>
</dbReference>
<dbReference type="InterPro" id="IPR050626">
    <property type="entry name" value="Peptidase_M16"/>
</dbReference>
<dbReference type="InterPro" id="IPR007863">
    <property type="entry name" value="Peptidase_M16_C"/>
</dbReference>
<dbReference type="InterPro" id="IPR032632">
    <property type="entry name" value="Peptidase_M16_M"/>
</dbReference>
<dbReference type="InterPro" id="IPR054734">
    <property type="entry name" value="PqqF-like_C_4"/>
</dbReference>
<dbReference type="NCBIfam" id="NF011681">
    <property type="entry name" value="PRK15101.1"/>
    <property type="match status" value="1"/>
</dbReference>
<dbReference type="PANTHER" id="PTHR43690:SF18">
    <property type="entry name" value="INSULIN-DEGRADING ENZYME-RELATED"/>
    <property type="match status" value="1"/>
</dbReference>
<dbReference type="PANTHER" id="PTHR43690">
    <property type="entry name" value="NARDILYSIN"/>
    <property type="match status" value="1"/>
</dbReference>
<dbReference type="Pfam" id="PF00675">
    <property type="entry name" value="Peptidase_M16"/>
    <property type="match status" value="1"/>
</dbReference>
<dbReference type="Pfam" id="PF05193">
    <property type="entry name" value="Peptidase_M16_C"/>
    <property type="match status" value="1"/>
</dbReference>
<dbReference type="Pfam" id="PF16187">
    <property type="entry name" value="Peptidase_M16_M"/>
    <property type="match status" value="1"/>
</dbReference>
<dbReference type="Pfam" id="PF22456">
    <property type="entry name" value="PqqF-like_C_4"/>
    <property type="match status" value="1"/>
</dbReference>
<dbReference type="SUPFAM" id="SSF63411">
    <property type="entry name" value="LuxS/MPP-like metallohydrolase"/>
    <property type="match status" value="4"/>
</dbReference>
<dbReference type="PROSITE" id="PS00143">
    <property type="entry name" value="INSULINASE"/>
    <property type="match status" value="1"/>
</dbReference>
<reference key="1">
    <citation type="journal article" date="1986" name="Nucleic Acids Res.">
        <title>Complete nucleotide sequence of the Escherichia coli ptr gene encoding protease III.</title>
        <authorList>
            <person name="Finch P.W."/>
            <person name="Wilson R.E."/>
            <person name="Brown K."/>
            <person name="Hickson I.D."/>
            <person name="Emmerson P.T."/>
        </authorList>
    </citation>
    <scope>NUCLEOTIDE SEQUENCE [GENOMIC DNA]</scope>
</reference>
<reference key="2">
    <citation type="journal article" date="1997" name="Science">
        <title>The complete genome sequence of Escherichia coli K-12.</title>
        <authorList>
            <person name="Blattner F.R."/>
            <person name="Plunkett G. III"/>
            <person name="Bloch C.A."/>
            <person name="Perna N.T."/>
            <person name="Burland V."/>
            <person name="Riley M."/>
            <person name="Collado-Vides J."/>
            <person name="Glasner J.D."/>
            <person name="Rode C.K."/>
            <person name="Mayhew G.F."/>
            <person name="Gregor J."/>
            <person name="Davis N.W."/>
            <person name="Kirkpatrick H.A."/>
            <person name="Goeden M.A."/>
            <person name="Rose D.J."/>
            <person name="Mau B."/>
            <person name="Shao Y."/>
        </authorList>
    </citation>
    <scope>NUCLEOTIDE SEQUENCE [LARGE SCALE GENOMIC DNA]</scope>
    <source>
        <strain>K12 / MG1655 / ATCC 47076</strain>
    </source>
</reference>
<reference key="3">
    <citation type="journal article" date="2006" name="Mol. Syst. Biol.">
        <title>Highly accurate genome sequences of Escherichia coli K-12 strains MG1655 and W3110.</title>
        <authorList>
            <person name="Hayashi K."/>
            <person name="Morooka N."/>
            <person name="Yamamoto Y."/>
            <person name="Fujita K."/>
            <person name="Isono K."/>
            <person name="Choi S."/>
            <person name="Ohtsubo E."/>
            <person name="Baba T."/>
            <person name="Wanner B.L."/>
            <person name="Mori H."/>
            <person name="Horiuchi T."/>
        </authorList>
    </citation>
    <scope>NUCLEOTIDE SEQUENCE [LARGE SCALE GENOMIC DNA]</scope>
    <source>
        <strain>K12 / W3110 / ATCC 27325 / DSM 5911</strain>
    </source>
</reference>
<reference key="4">
    <citation type="journal article" date="1986" name="Nucleic Acids Res.">
        <title>Complete nucleotide sequence of the Escherichia coli recB gene.</title>
        <authorList>
            <person name="Finch P.W."/>
            <person name="Storey A."/>
            <person name="Chapman K.E."/>
            <person name="Brown K."/>
            <person name="Hickson I.D."/>
            <person name="Emmerson P.T."/>
        </authorList>
    </citation>
    <scope>NUCLEOTIDE SEQUENCE [GENOMIC DNA] OF 853-962</scope>
</reference>
<reference key="5">
    <citation type="journal article" date="1987" name="Gene">
        <title>Analysis of the regulatory region of the protease III (ptr) gene of Escherichia coli K-12.</title>
        <authorList>
            <person name="Claverie-Martin F."/>
            <person name="Diaz-Torres M.R."/>
            <person name="Kushner S.R."/>
        </authorList>
    </citation>
    <scope>NUCLEOTIDE SEQUENCE [GENOMIC DNA] OF 1-296</scope>
    <source>
        <strain>K12</strain>
    </source>
</reference>
<reference key="6">
    <citation type="journal article" date="1992" name="Proc. Natl. Acad. Sci. U.S.A.">
        <title>An unusual active site identified in a family of zinc metalloendopeptidases.</title>
        <authorList>
            <person name="Becker A.B."/>
            <person name="Roth R.A."/>
        </authorList>
    </citation>
    <scope>MUTAGENESIS</scope>
    <scope>ACTIVE SITE</scope>
</reference>
<reference key="7">
    <citation type="journal article" date="1993" name="Biochem. J.">
        <title>Identification of glutamate-169 as the third zinc-binding residue in proteinase III, a member of the family of insulin-degrading enzymes.</title>
        <authorList>
            <person name="Becker A.B."/>
            <person name="Roth R.A."/>
        </authorList>
    </citation>
    <scope>MUTAGENESIS</scope>
    <scope>ACTIVE SITE</scope>
</reference>
<reference key="8">
    <citation type="journal article" date="1997" name="Electrophoresis">
        <title>Escherichia coli proteome analysis using the gene-protein database.</title>
        <authorList>
            <person name="VanBogelen R.A."/>
            <person name="Abshire K.Z."/>
            <person name="Moldover B."/>
            <person name="Olson E.R."/>
            <person name="Neidhardt F.C."/>
        </authorList>
    </citation>
    <scope>IDENTIFICATION BY 2D-GEL</scope>
</reference>
<gene>
    <name type="primary">ptrA</name>
    <name type="synonym">ptr</name>
    <name type="ordered locus">b2821</name>
    <name type="ordered locus">JW2789</name>
</gene>
<organism>
    <name type="scientific">Escherichia coli (strain K12)</name>
    <dbReference type="NCBI Taxonomy" id="83333"/>
    <lineage>
        <taxon>Bacteria</taxon>
        <taxon>Pseudomonadati</taxon>
        <taxon>Pseudomonadota</taxon>
        <taxon>Gammaproteobacteria</taxon>
        <taxon>Enterobacterales</taxon>
        <taxon>Enterobacteriaceae</taxon>
        <taxon>Escherichia</taxon>
    </lineage>
</organism>
<comment type="function">
    <text>Endopeptidase that degrades small peptides of less than 7 kDa, such as glucagon and insulin.</text>
</comment>
<comment type="catalytic activity">
    <reaction evidence="1">
        <text>Preferential cleavage of 16-Tyr-|-Leu-17 and 25-Phe-|-Tyr-26 bonds of oxidized insulin B chain. Also acts on other substrates of Mw less than 7 kDa such as insulin and glucagon.</text>
        <dbReference type="EC" id="3.4.24.55"/>
    </reaction>
</comment>
<comment type="cofactor">
    <cofactor>
        <name>Zn(2+)</name>
        <dbReference type="ChEBI" id="CHEBI:29105"/>
    </cofactor>
    <text>Binds 1 zinc ion per subunit.</text>
</comment>
<comment type="subunit">
    <text>Monomer.</text>
</comment>
<comment type="subcellular location">
    <subcellularLocation>
        <location>Periplasm</location>
    </subcellularLocation>
</comment>
<comment type="similarity">
    <text evidence="4">Belongs to the peptidase M16 family.</text>
</comment>
<proteinExistence type="evidence at protein level"/>
<feature type="signal peptide">
    <location>
        <begin position="1"/>
        <end position="23"/>
    </location>
</feature>
<feature type="chain" id="PRO_0000026758" description="Protease 3">
    <location>
        <begin position="24"/>
        <end position="962"/>
    </location>
</feature>
<feature type="active site" description="Proton acceptor" evidence="1 2 3">
    <location>
        <position position="91"/>
    </location>
</feature>
<feature type="binding site" evidence="1 2">
    <location>
        <position position="88"/>
    </location>
    <ligand>
        <name>Zn(2+)</name>
        <dbReference type="ChEBI" id="CHEBI:29105"/>
    </ligand>
</feature>
<feature type="binding site" evidence="1 2">
    <location>
        <position position="92"/>
    </location>
    <ligand>
        <name>Zn(2+)</name>
        <dbReference type="ChEBI" id="CHEBI:29105"/>
    </ligand>
</feature>
<feature type="binding site">
    <location>
        <position position="169"/>
    </location>
    <ligand>
        <name>Zn(2+)</name>
        <dbReference type="ChEBI" id="CHEBI:29105"/>
    </ligand>
</feature>
<feature type="mutagenesis site" description="Loss of activity and of Zn-binding.">
    <original>H</original>
    <variation>R</variation>
    <location>
        <position position="88"/>
    </location>
</feature>
<feature type="mutagenesis site" description="Loss of activity.">
    <original>E</original>
    <variation>Q</variation>
    <location>
        <position position="91"/>
    </location>
</feature>
<feature type="mutagenesis site" description="Loss of activity and of Zn-binding.">
    <original>H</original>
    <variation>R</variation>
    <location>
        <position position="92"/>
    </location>
</feature>
<feature type="mutagenesis site" description="20% loss of activity.">
    <original>E</original>
    <variation>Q</variation>
    <location>
        <position position="162"/>
    </location>
</feature>
<feature type="mutagenesis site" description="Loss of activity and of Zn-binding.">
    <original>E</original>
    <variation>Q</variation>
    <location>
        <position position="169"/>
    </location>
</feature>
<feature type="mutagenesis site" description="No loss of activity.">
    <original>E</original>
    <variation>Q</variation>
    <location>
        <position position="204"/>
    </location>
</feature>
<feature type="sequence conflict" description="In Ref. 5; AAA24436." evidence="4" ref="5">
    <original>IIIHYVPA</original>
    <variation>HYHSLRPW</variation>
    <location>
        <begin position="277"/>
        <end position="284"/>
    </location>
</feature>
<feature type="strand" evidence="5">
    <location>
        <begin position="27"/>
        <end position="29"/>
    </location>
</feature>
<feature type="strand" evidence="5">
    <location>
        <begin position="43"/>
        <end position="49"/>
    </location>
</feature>
<feature type="strand" evidence="5">
    <location>
        <begin position="54"/>
        <end position="59"/>
    </location>
</feature>
<feature type="strand" evidence="5">
    <location>
        <begin position="64"/>
        <end position="73"/>
    </location>
</feature>
<feature type="helix" evidence="5">
    <location>
        <begin position="76"/>
        <end position="78"/>
    </location>
</feature>
<feature type="helix" evidence="5">
    <location>
        <begin position="81"/>
        <end position="83"/>
    </location>
</feature>
<feature type="helix" evidence="5">
    <location>
        <begin position="86"/>
        <end position="93"/>
    </location>
</feature>
<feature type="strand" evidence="5">
    <location>
        <begin position="98"/>
        <end position="101"/>
    </location>
</feature>
<feature type="helix" evidence="5">
    <location>
        <begin position="106"/>
        <end position="112"/>
    </location>
</feature>
<feature type="turn" evidence="5">
    <location>
        <begin position="113"/>
        <end position="115"/>
    </location>
</feature>
<feature type="strand" evidence="5">
    <location>
        <begin position="117"/>
        <end position="122"/>
    </location>
</feature>
<feature type="strand" evidence="5">
    <location>
        <begin position="127"/>
        <end position="133"/>
    </location>
</feature>
<feature type="helix" evidence="5">
    <location>
        <begin position="135"/>
        <end position="137"/>
    </location>
</feature>
<feature type="helix" evidence="5">
    <location>
        <begin position="138"/>
        <end position="150"/>
    </location>
</feature>
<feature type="helix" evidence="5">
    <location>
        <begin position="159"/>
        <end position="173"/>
    </location>
</feature>
<feature type="helix" evidence="5">
    <location>
        <begin position="177"/>
        <end position="187"/>
    </location>
</feature>
<feature type="helix" evidence="5">
    <location>
        <begin position="194"/>
        <end position="196"/>
    </location>
</feature>
<feature type="helix" evidence="5">
    <location>
        <begin position="203"/>
        <end position="206"/>
    </location>
</feature>
<feature type="helix" evidence="5">
    <location>
        <begin position="214"/>
        <end position="225"/>
    </location>
</feature>
<feature type="turn" evidence="5">
    <location>
        <begin position="228"/>
        <end position="230"/>
    </location>
</feature>
<feature type="strand" evidence="5">
    <location>
        <begin position="232"/>
        <end position="239"/>
    </location>
</feature>
<feature type="helix" evidence="5">
    <location>
        <begin position="241"/>
        <end position="250"/>
    </location>
</feature>
<feature type="helix" evidence="5">
    <location>
        <begin position="252"/>
        <end position="254"/>
    </location>
</feature>
<feature type="helix" evidence="5">
    <location>
        <begin position="272"/>
        <end position="274"/>
    </location>
</feature>
<feature type="strand" evidence="5">
    <location>
        <begin position="275"/>
        <end position="281"/>
    </location>
</feature>
<feature type="strand" evidence="5">
    <location>
        <begin position="289"/>
        <end position="297"/>
    </location>
</feature>
<feature type="helix" evidence="5">
    <location>
        <begin position="300"/>
        <end position="305"/>
    </location>
</feature>
<feature type="helix" evidence="5">
    <location>
        <begin position="307"/>
        <end position="316"/>
    </location>
</feature>
<feature type="helix" evidence="5">
    <location>
        <begin position="323"/>
        <end position="329"/>
    </location>
</feature>
<feature type="strand" evidence="5">
    <location>
        <begin position="333"/>
        <end position="343"/>
    </location>
</feature>
<feature type="strand" evidence="5">
    <location>
        <begin position="346"/>
        <end position="357"/>
    </location>
</feature>
<feature type="helix" evidence="5">
    <location>
        <begin position="359"/>
        <end position="363"/>
    </location>
</feature>
<feature type="helix" evidence="5">
    <location>
        <begin position="365"/>
        <end position="382"/>
    </location>
</feature>
<feature type="helix" evidence="5">
    <location>
        <begin position="386"/>
        <end position="401"/>
    </location>
</feature>
<feature type="helix" evidence="5">
    <location>
        <begin position="409"/>
        <end position="419"/>
    </location>
</feature>
<feature type="helix" evidence="5">
    <location>
        <begin position="424"/>
        <end position="426"/>
    </location>
</feature>
<feature type="turn" evidence="5">
    <location>
        <begin position="427"/>
        <end position="432"/>
    </location>
</feature>
<feature type="helix" evidence="5">
    <location>
        <begin position="439"/>
        <end position="448"/>
    </location>
</feature>
<feature type="helix" evidence="5">
    <location>
        <begin position="451"/>
        <end position="453"/>
    </location>
</feature>
<feature type="strand" evidence="5">
    <location>
        <begin position="455"/>
        <end position="459"/>
    </location>
</feature>
<feature type="turn" evidence="5">
    <location>
        <begin position="470"/>
        <end position="472"/>
    </location>
</feature>
<feature type="strand" evidence="5">
    <location>
        <begin position="475"/>
        <end position="480"/>
    </location>
</feature>
<feature type="helix" evidence="5">
    <location>
        <begin position="483"/>
        <end position="494"/>
    </location>
</feature>
<feature type="strand" evidence="5">
    <location>
        <begin position="524"/>
        <end position="529"/>
    </location>
</feature>
<feature type="strand" evidence="5">
    <location>
        <begin position="532"/>
        <end position="537"/>
    </location>
</feature>
<feature type="strand" evidence="5">
    <location>
        <begin position="545"/>
        <end position="555"/>
    </location>
</feature>
<feature type="helix" evidence="5">
    <location>
        <begin position="557"/>
        <end position="560"/>
    </location>
</feature>
<feature type="helix" evidence="5">
    <location>
        <begin position="563"/>
        <end position="589"/>
    </location>
</feature>
<feature type="strand" evidence="5">
    <location>
        <begin position="592"/>
        <end position="612"/>
    </location>
</feature>
<feature type="helix" evidence="5">
    <location>
        <begin position="613"/>
        <end position="626"/>
    </location>
</feature>
<feature type="helix" evidence="5">
    <location>
        <begin position="632"/>
        <end position="648"/>
    </location>
</feature>
<feature type="helix" evidence="5">
    <location>
        <begin position="653"/>
        <end position="663"/>
    </location>
</feature>
<feature type="strand" evidence="5">
    <location>
        <begin position="666"/>
        <end position="668"/>
    </location>
</feature>
<feature type="helix" evidence="5">
    <location>
        <begin position="672"/>
        <end position="678"/>
    </location>
</feature>
<feature type="helix" evidence="5">
    <location>
        <begin position="679"/>
        <end position="681"/>
    </location>
</feature>
<feature type="helix" evidence="5">
    <location>
        <begin position="684"/>
        <end position="695"/>
    </location>
</feature>
<feature type="strand" evidence="5">
    <location>
        <begin position="699"/>
        <end position="707"/>
    </location>
</feature>
<feature type="helix" evidence="5">
    <location>
        <begin position="710"/>
        <end position="724"/>
    </location>
</feature>
<feature type="strand" evidence="5">
    <location>
        <begin position="735"/>
        <end position="737"/>
    </location>
</feature>
<feature type="strand" evidence="5">
    <location>
        <begin position="743"/>
        <end position="749"/>
    </location>
</feature>
<feature type="strand" evidence="5">
    <location>
        <begin position="752"/>
        <end position="754"/>
    </location>
</feature>
<feature type="strand" evidence="5">
    <location>
        <begin position="756"/>
        <end position="763"/>
    </location>
</feature>
<feature type="helix" evidence="5">
    <location>
        <begin position="769"/>
        <end position="787"/>
    </location>
</feature>
<feature type="helix" evidence="5">
    <location>
        <begin position="789"/>
        <end position="792"/>
    </location>
</feature>
<feature type="strand" evidence="5">
    <location>
        <begin position="797"/>
        <end position="799"/>
    </location>
</feature>
<feature type="strand" evidence="5">
    <location>
        <begin position="801"/>
        <end position="808"/>
    </location>
</feature>
<feature type="strand" evidence="5">
    <location>
        <begin position="811"/>
        <end position="823"/>
    </location>
</feature>
<feature type="helix" evidence="5">
    <location>
        <begin position="825"/>
        <end position="844"/>
    </location>
</feature>
<feature type="helix" evidence="5">
    <location>
        <begin position="848"/>
        <end position="862"/>
    </location>
</feature>
<feature type="helix" evidence="5">
    <location>
        <begin position="869"/>
        <end position="882"/>
    </location>
</feature>
<feature type="helix" evidence="5">
    <location>
        <begin position="889"/>
        <end position="898"/>
    </location>
</feature>
<feature type="helix" evidence="5">
    <location>
        <begin position="902"/>
        <end position="912"/>
    </location>
</feature>
<feature type="strand" evidence="5">
    <location>
        <begin position="917"/>
        <end position="925"/>
    </location>
</feature>
<feature type="turn" evidence="5">
    <location>
        <begin position="930"/>
        <end position="932"/>
    </location>
</feature>
<feature type="helix" evidence="5">
    <location>
        <begin position="947"/>
        <end position="951"/>
    </location>
</feature>
<feature type="strand" evidence="5">
    <location>
        <begin position="956"/>
        <end position="958"/>
    </location>
</feature>
<name>PTRA_ECOLI</name>
<evidence type="ECO:0000255" key="1">
    <source>
        <dbReference type="PROSITE-ProRule" id="PRU10096"/>
    </source>
</evidence>
<evidence type="ECO:0000269" key="2">
    <source>
    </source>
</evidence>
<evidence type="ECO:0000269" key="3">
    <source>
    </source>
</evidence>
<evidence type="ECO:0000305" key="4"/>
<evidence type="ECO:0007829" key="5">
    <source>
        <dbReference type="PDB" id="1Q2L"/>
    </source>
</evidence>